<sequence length="677" mass="73210">MSDRAEDPAARAAQLREQLEYHAHRYYVLDAPEIPDAEYDRLFTELQALEAAHPGLRTPDSPTQRVIGAVLEGLSAVRHAVPMLSIKTETDTTPTGALKFDAAVRNALKLPPDAPPLRYAAELKFDGLAINLRYQAGRLVQAATRGDGETGEDVTHTVGTIESVPKQLRGITAPVLEVRGEVFMRRDDFEALNERQREAGLKTFVNPRNAAAGIVRQLDASIARQRPLSFFAYGLGDVQGWDVPPTHAGLLDALAALGLPVDAHRTVVEGGEALAAFHAGIAAERDALPFDIDGVVYKVDERALQQQLGFKSREPRWAVAHKYPAQEQSTQLAGIEIQVGRTGKLTPVAKLQPVFVGGTTVSNATLHNRFELRRKGIRIGDTVIVRRAGDVIPEVVGRVPVPRTAYIPNFRMPRACPVCGSQALRERGSVDYRCSGGLFCAAQRKQALLHFAGRRMMDIEGLGDKLVEQLVDGGIIRTLPELYRLGVAKLVALERMGDKSAANLVAALEASKATTLARFLFSLGIRHIGEATAKDLARHFGALDRVMDASVEQLLEVNDVGPVVAQSLRTFFDQPHNREVVEQLRAAGVHWDEHSGEADLTPRPLAGKTFVLTGTLPSLGREAAKELIEAAGGKVAGSVSKKTDYVVAGEEAGSKLEKAQALGVAVIDEAALRALLD</sequence>
<dbReference type="EC" id="6.5.1.2" evidence="1"/>
<dbReference type="EMBL" id="CP000555">
    <property type="protein sequence ID" value="ABM94771.1"/>
    <property type="molecule type" value="Genomic_DNA"/>
</dbReference>
<dbReference type="RefSeq" id="WP_011829408.1">
    <property type="nucleotide sequence ID" value="NC_008825.1"/>
</dbReference>
<dbReference type="SMR" id="A2SGT2"/>
<dbReference type="STRING" id="420662.Mpe_A1812"/>
<dbReference type="KEGG" id="mpt:Mpe_A1812"/>
<dbReference type="eggNOG" id="COG0272">
    <property type="taxonomic scope" value="Bacteria"/>
</dbReference>
<dbReference type="HOGENOM" id="CLU_007764_2_1_4"/>
<dbReference type="Proteomes" id="UP000000366">
    <property type="component" value="Chromosome"/>
</dbReference>
<dbReference type="GO" id="GO:0005829">
    <property type="term" value="C:cytosol"/>
    <property type="evidence" value="ECO:0007669"/>
    <property type="project" value="TreeGrafter"/>
</dbReference>
<dbReference type="GO" id="GO:0003677">
    <property type="term" value="F:DNA binding"/>
    <property type="evidence" value="ECO:0007669"/>
    <property type="project" value="InterPro"/>
</dbReference>
<dbReference type="GO" id="GO:0003911">
    <property type="term" value="F:DNA ligase (NAD+) activity"/>
    <property type="evidence" value="ECO:0007669"/>
    <property type="project" value="UniProtKB-UniRule"/>
</dbReference>
<dbReference type="GO" id="GO:0046872">
    <property type="term" value="F:metal ion binding"/>
    <property type="evidence" value="ECO:0007669"/>
    <property type="project" value="UniProtKB-KW"/>
</dbReference>
<dbReference type="GO" id="GO:0006281">
    <property type="term" value="P:DNA repair"/>
    <property type="evidence" value="ECO:0007669"/>
    <property type="project" value="UniProtKB-KW"/>
</dbReference>
<dbReference type="GO" id="GO:0006260">
    <property type="term" value="P:DNA replication"/>
    <property type="evidence" value="ECO:0007669"/>
    <property type="project" value="UniProtKB-KW"/>
</dbReference>
<dbReference type="CDD" id="cd17748">
    <property type="entry name" value="BRCT_DNA_ligase_like"/>
    <property type="match status" value="1"/>
</dbReference>
<dbReference type="CDD" id="cd00114">
    <property type="entry name" value="LIGANc"/>
    <property type="match status" value="1"/>
</dbReference>
<dbReference type="FunFam" id="1.10.150.20:FF:000006">
    <property type="entry name" value="DNA ligase"/>
    <property type="match status" value="1"/>
</dbReference>
<dbReference type="FunFam" id="1.10.150.20:FF:000007">
    <property type="entry name" value="DNA ligase"/>
    <property type="match status" value="1"/>
</dbReference>
<dbReference type="FunFam" id="1.10.287.610:FF:000002">
    <property type="entry name" value="DNA ligase"/>
    <property type="match status" value="1"/>
</dbReference>
<dbReference type="FunFam" id="2.40.50.140:FF:000012">
    <property type="entry name" value="DNA ligase"/>
    <property type="match status" value="1"/>
</dbReference>
<dbReference type="FunFam" id="3.40.50.10190:FF:000054">
    <property type="entry name" value="DNA ligase"/>
    <property type="match status" value="1"/>
</dbReference>
<dbReference type="Gene3D" id="6.20.10.30">
    <property type="match status" value="1"/>
</dbReference>
<dbReference type="Gene3D" id="1.10.150.20">
    <property type="entry name" value="5' to 3' exonuclease, C-terminal subdomain"/>
    <property type="match status" value="2"/>
</dbReference>
<dbReference type="Gene3D" id="3.40.50.10190">
    <property type="entry name" value="BRCT domain"/>
    <property type="match status" value="1"/>
</dbReference>
<dbReference type="Gene3D" id="3.30.470.30">
    <property type="entry name" value="DNA ligase/mRNA capping enzyme"/>
    <property type="match status" value="1"/>
</dbReference>
<dbReference type="Gene3D" id="1.10.287.610">
    <property type="entry name" value="Helix hairpin bin"/>
    <property type="match status" value="1"/>
</dbReference>
<dbReference type="Gene3D" id="2.40.50.140">
    <property type="entry name" value="Nucleic acid-binding proteins"/>
    <property type="match status" value="1"/>
</dbReference>
<dbReference type="HAMAP" id="MF_01588">
    <property type="entry name" value="DNA_ligase_A"/>
    <property type="match status" value="1"/>
</dbReference>
<dbReference type="InterPro" id="IPR001357">
    <property type="entry name" value="BRCT_dom"/>
</dbReference>
<dbReference type="InterPro" id="IPR036420">
    <property type="entry name" value="BRCT_dom_sf"/>
</dbReference>
<dbReference type="InterPro" id="IPR041663">
    <property type="entry name" value="DisA/LigA_HHH"/>
</dbReference>
<dbReference type="InterPro" id="IPR001679">
    <property type="entry name" value="DNA_ligase"/>
</dbReference>
<dbReference type="InterPro" id="IPR018239">
    <property type="entry name" value="DNA_ligase_AS"/>
</dbReference>
<dbReference type="InterPro" id="IPR033136">
    <property type="entry name" value="DNA_ligase_CS"/>
</dbReference>
<dbReference type="InterPro" id="IPR013839">
    <property type="entry name" value="DNAligase_adenylation"/>
</dbReference>
<dbReference type="InterPro" id="IPR013840">
    <property type="entry name" value="DNAligase_N"/>
</dbReference>
<dbReference type="InterPro" id="IPR003583">
    <property type="entry name" value="Hlx-hairpin-Hlx_DNA-bd_motif"/>
</dbReference>
<dbReference type="InterPro" id="IPR012340">
    <property type="entry name" value="NA-bd_OB-fold"/>
</dbReference>
<dbReference type="InterPro" id="IPR004150">
    <property type="entry name" value="NAD_DNA_ligase_OB"/>
</dbReference>
<dbReference type="InterPro" id="IPR010994">
    <property type="entry name" value="RuvA_2-like"/>
</dbReference>
<dbReference type="InterPro" id="IPR004149">
    <property type="entry name" value="Znf_DNAligase_C4"/>
</dbReference>
<dbReference type="NCBIfam" id="TIGR00575">
    <property type="entry name" value="dnlj"/>
    <property type="match status" value="1"/>
</dbReference>
<dbReference type="NCBIfam" id="NF005932">
    <property type="entry name" value="PRK07956.1"/>
    <property type="match status" value="1"/>
</dbReference>
<dbReference type="PANTHER" id="PTHR23389">
    <property type="entry name" value="CHROMOSOME TRANSMISSION FIDELITY FACTOR 18"/>
    <property type="match status" value="1"/>
</dbReference>
<dbReference type="PANTHER" id="PTHR23389:SF9">
    <property type="entry name" value="DNA LIGASE"/>
    <property type="match status" value="1"/>
</dbReference>
<dbReference type="Pfam" id="PF00533">
    <property type="entry name" value="BRCT"/>
    <property type="match status" value="1"/>
</dbReference>
<dbReference type="Pfam" id="PF01653">
    <property type="entry name" value="DNA_ligase_aden"/>
    <property type="match status" value="1"/>
</dbReference>
<dbReference type="Pfam" id="PF03120">
    <property type="entry name" value="DNA_ligase_OB"/>
    <property type="match status" value="1"/>
</dbReference>
<dbReference type="Pfam" id="PF03119">
    <property type="entry name" value="DNA_ligase_ZBD"/>
    <property type="match status" value="1"/>
</dbReference>
<dbReference type="Pfam" id="PF12826">
    <property type="entry name" value="HHH_2"/>
    <property type="match status" value="1"/>
</dbReference>
<dbReference type="Pfam" id="PF14520">
    <property type="entry name" value="HHH_5"/>
    <property type="match status" value="1"/>
</dbReference>
<dbReference type="Pfam" id="PF22745">
    <property type="entry name" value="Nlig-Ia"/>
    <property type="match status" value="1"/>
</dbReference>
<dbReference type="PIRSF" id="PIRSF001604">
    <property type="entry name" value="LigA"/>
    <property type="match status" value="1"/>
</dbReference>
<dbReference type="SMART" id="SM00292">
    <property type="entry name" value="BRCT"/>
    <property type="match status" value="1"/>
</dbReference>
<dbReference type="SMART" id="SM00278">
    <property type="entry name" value="HhH1"/>
    <property type="match status" value="4"/>
</dbReference>
<dbReference type="SMART" id="SM00532">
    <property type="entry name" value="LIGANc"/>
    <property type="match status" value="1"/>
</dbReference>
<dbReference type="SUPFAM" id="SSF52113">
    <property type="entry name" value="BRCT domain"/>
    <property type="match status" value="1"/>
</dbReference>
<dbReference type="SUPFAM" id="SSF56091">
    <property type="entry name" value="DNA ligase/mRNA capping enzyme, catalytic domain"/>
    <property type="match status" value="1"/>
</dbReference>
<dbReference type="SUPFAM" id="SSF50249">
    <property type="entry name" value="Nucleic acid-binding proteins"/>
    <property type="match status" value="1"/>
</dbReference>
<dbReference type="SUPFAM" id="SSF47781">
    <property type="entry name" value="RuvA domain 2-like"/>
    <property type="match status" value="1"/>
</dbReference>
<dbReference type="PROSITE" id="PS50172">
    <property type="entry name" value="BRCT"/>
    <property type="match status" value="1"/>
</dbReference>
<dbReference type="PROSITE" id="PS01055">
    <property type="entry name" value="DNA_LIGASE_N1"/>
    <property type="match status" value="1"/>
</dbReference>
<dbReference type="PROSITE" id="PS01056">
    <property type="entry name" value="DNA_LIGASE_N2"/>
    <property type="match status" value="1"/>
</dbReference>
<name>DNLJ_METPP</name>
<evidence type="ECO:0000255" key="1">
    <source>
        <dbReference type="HAMAP-Rule" id="MF_01588"/>
    </source>
</evidence>
<proteinExistence type="inferred from homology"/>
<feature type="chain" id="PRO_0000313306" description="DNA ligase">
    <location>
        <begin position="1"/>
        <end position="677"/>
    </location>
</feature>
<feature type="domain" description="BRCT" evidence="1">
    <location>
        <begin position="600"/>
        <end position="677"/>
    </location>
</feature>
<feature type="active site" description="N6-AMP-lysine intermediate" evidence="1">
    <location>
        <position position="124"/>
    </location>
</feature>
<feature type="binding site" evidence="1">
    <location>
        <begin position="36"/>
        <end position="40"/>
    </location>
    <ligand>
        <name>NAD(+)</name>
        <dbReference type="ChEBI" id="CHEBI:57540"/>
    </ligand>
</feature>
<feature type="binding site" evidence="1">
    <location>
        <begin position="85"/>
        <end position="86"/>
    </location>
    <ligand>
        <name>NAD(+)</name>
        <dbReference type="ChEBI" id="CHEBI:57540"/>
    </ligand>
</feature>
<feature type="binding site" evidence="1">
    <location>
        <position position="122"/>
    </location>
    <ligand>
        <name>NAD(+)</name>
        <dbReference type="ChEBI" id="CHEBI:57540"/>
    </ligand>
</feature>
<feature type="binding site" evidence="1">
    <location>
        <position position="145"/>
    </location>
    <ligand>
        <name>NAD(+)</name>
        <dbReference type="ChEBI" id="CHEBI:57540"/>
    </ligand>
</feature>
<feature type="binding site" evidence="1">
    <location>
        <position position="181"/>
    </location>
    <ligand>
        <name>NAD(+)</name>
        <dbReference type="ChEBI" id="CHEBI:57540"/>
    </ligand>
</feature>
<feature type="binding site" evidence="1">
    <location>
        <position position="298"/>
    </location>
    <ligand>
        <name>NAD(+)</name>
        <dbReference type="ChEBI" id="CHEBI:57540"/>
    </ligand>
</feature>
<feature type="binding site" evidence="1">
    <location>
        <position position="322"/>
    </location>
    <ligand>
        <name>NAD(+)</name>
        <dbReference type="ChEBI" id="CHEBI:57540"/>
    </ligand>
</feature>
<feature type="binding site" evidence="1">
    <location>
        <position position="416"/>
    </location>
    <ligand>
        <name>Zn(2+)</name>
        <dbReference type="ChEBI" id="CHEBI:29105"/>
    </ligand>
</feature>
<feature type="binding site" evidence="1">
    <location>
        <position position="419"/>
    </location>
    <ligand>
        <name>Zn(2+)</name>
        <dbReference type="ChEBI" id="CHEBI:29105"/>
    </ligand>
</feature>
<feature type="binding site" evidence="1">
    <location>
        <position position="434"/>
    </location>
    <ligand>
        <name>Zn(2+)</name>
        <dbReference type="ChEBI" id="CHEBI:29105"/>
    </ligand>
</feature>
<feature type="binding site" evidence="1">
    <location>
        <position position="440"/>
    </location>
    <ligand>
        <name>Zn(2+)</name>
        <dbReference type="ChEBI" id="CHEBI:29105"/>
    </ligand>
</feature>
<reference key="1">
    <citation type="journal article" date="2007" name="J. Bacteriol.">
        <title>Whole-genome analysis of the methyl tert-butyl ether-degrading beta-proteobacterium Methylibium petroleiphilum PM1.</title>
        <authorList>
            <person name="Kane S.R."/>
            <person name="Chakicherla A.Y."/>
            <person name="Chain P.S.G."/>
            <person name="Schmidt R."/>
            <person name="Shin M.W."/>
            <person name="Legler T.C."/>
            <person name="Scow K.M."/>
            <person name="Larimer F.W."/>
            <person name="Lucas S.M."/>
            <person name="Richardson P.M."/>
            <person name="Hristova K.R."/>
        </authorList>
    </citation>
    <scope>NUCLEOTIDE SEQUENCE [LARGE SCALE GENOMIC DNA]</scope>
    <source>
        <strain>ATCC BAA-1232 / LMG 22953 / PM1</strain>
    </source>
</reference>
<organism>
    <name type="scientific">Methylibium petroleiphilum (strain ATCC BAA-1232 / LMG 22953 / PM1)</name>
    <dbReference type="NCBI Taxonomy" id="420662"/>
    <lineage>
        <taxon>Bacteria</taxon>
        <taxon>Pseudomonadati</taxon>
        <taxon>Pseudomonadota</taxon>
        <taxon>Betaproteobacteria</taxon>
        <taxon>Burkholderiales</taxon>
        <taxon>Sphaerotilaceae</taxon>
        <taxon>Methylibium</taxon>
    </lineage>
</organism>
<gene>
    <name evidence="1" type="primary">ligA</name>
    <name type="ordered locus">Mpe_A1812</name>
</gene>
<protein>
    <recommendedName>
        <fullName evidence="1">DNA ligase</fullName>
        <ecNumber evidence="1">6.5.1.2</ecNumber>
    </recommendedName>
    <alternativeName>
        <fullName evidence="1">Polydeoxyribonucleotide synthase [NAD(+)]</fullName>
    </alternativeName>
</protein>
<keyword id="KW-0227">DNA damage</keyword>
<keyword id="KW-0234">DNA repair</keyword>
<keyword id="KW-0235">DNA replication</keyword>
<keyword id="KW-0436">Ligase</keyword>
<keyword id="KW-0460">Magnesium</keyword>
<keyword id="KW-0464">Manganese</keyword>
<keyword id="KW-0479">Metal-binding</keyword>
<keyword id="KW-0520">NAD</keyword>
<keyword id="KW-1185">Reference proteome</keyword>
<keyword id="KW-0862">Zinc</keyword>
<accession>A2SGT2</accession>
<comment type="function">
    <text evidence="1">DNA ligase that catalyzes the formation of phosphodiester linkages between 5'-phosphoryl and 3'-hydroxyl groups in double-stranded DNA using NAD as a coenzyme and as the energy source for the reaction. It is essential for DNA replication and repair of damaged DNA.</text>
</comment>
<comment type="catalytic activity">
    <reaction evidence="1">
        <text>NAD(+) + (deoxyribonucleotide)n-3'-hydroxyl + 5'-phospho-(deoxyribonucleotide)m = (deoxyribonucleotide)n+m + AMP + beta-nicotinamide D-nucleotide.</text>
        <dbReference type="EC" id="6.5.1.2"/>
    </reaction>
</comment>
<comment type="cofactor">
    <cofactor evidence="1">
        <name>Mg(2+)</name>
        <dbReference type="ChEBI" id="CHEBI:18420"/>
    </cofactor>
    <cofactor evidence="1">
        <name>Mn(2+)</name>
        <dbReference type="ChEBI" id="CHEBI:29035"/>
    </cofactor>
</comment>
<comment type="similarity">
    <text evidence="1">Belongs to the NAD-dependent DNA ligase family. LigA subfamily.</text>
</comment>